<evidence type="ECO:0000250" key="1"/>
<evidence type="ECO:0000255" key="2"/>
<evidence type="ECO:0000269" key="3">
    <source>
    </source>
</evidence>
<name>GAA1_SCHPO</name>
<protein>
    <recommendedName>
        <fullName>GPI transamidase component gaa1</fullName>
    </recommendedName>
</protein>
<gene>
    <name type="primary">gaa1</name>
    <name type="ORF">SPAC1002.11</name>
</gene>
<organism>
    <name type="scientific">Schizosaccharomyces pombe (strain 972 / ATCC 24843)</name>
    <name type="common">Fission yeast</name>
    <dbReference type="NCBI Taxonomy" id="284812"/>
    <lineage>
        <taxon>Eukaryota</taxon>
        <taxon>Fungi</taxon>
        <taxon>Dikarya</taxon>
        <taxon>Ascomycota</taxon>
        <taxon>Taphrinomycotina</taxon>
        <taxon>Schizosaccharomycetes</taxon>
        <taxon>Schizosaccharomycetales</taxon>
        <taxon>Schizosaccharomycetaceae</taxon>
        <taxon>Schizosaccharomyces</taxon>
    </lineage>
</organism>
<feature type="chain" id="PRO_0000316598" description="GPI transamidase component gaa1">
    <location>
        <begin position="1"/>
        <end position="581"/>
    </location>
</feature>
<feature type="topological domain" description="Cytoplasmic" evidence="2">
    <location>
        <begin position="1"/>
        <end position="17"/>
    </location>
</feature>
<feature type="transmembrane region" description="Helical" evidence="2">
    <location>
        <begin position="18"/>
        <end position="38"/>
    </location>
</feature>
<feature type="topological domain" description="Lumenal" evidence="2">
    <location>
        <begin position="39"/>
        <end position="366"/>
    </location>
</feature>
<feature type="transmembrane region" description="Helical" evidence="2">
    <location>
        <begin position="367"/>
        <end position="387"/>
    </location>
</feature>
<feature type="topological domain" description="Cytoplasmic" evidence="2">
    <location>
        <begin position="388"/>
        <end position="403"/>
    </location>
</feature>
<feature type="transmembrane region" description="Helical" evidence="2">
    <location>
        <begin position="404"/>
        <end position="424"/>
    </location>
</feature>
<feature type="topological domain" description="Lumenal" evidence="2">
    <location>
        <begin position="425"/>
        <end position="427"/>
    </location>
</feature>
<feature type="transmembrane region" description="Helical" evidence="2">
    <location>
        <begin position="428"/>
        <end position="448"/>
    </location>
</feature>
<feature type="topological domain" description="Cytoplasmic" evidence="2">
    <location>
        <begin position="449"/>
        <end position="467"/>
    </location>
</feature>
<feature type="transmembrane region" description="Helical" evidence="2">
    <location>
        <begin position="468"/>
        <end position="488"/>
    </location>
</feature>
<feature type="topological domain" description="Lumenal" evidence="2">
    <location>
        <begin position="489"/>
        <end position="500"/>
    </location>
</feature>
<feature type="transmembrane region" description="Helical" evidence="2">
    <location>
        <begin position="501"/>
        <end position="521"/>
    </location>
</feature>
<feature type="topological domain" description="Cytoplasmic" evidence="2">
    <location>
        <begin position="522"/>
        <end position="548"/>
    </location>
</feature>
<feature type="transmembrane region" description="Helical" evidence="2">
    <location>
        <begin position="549"/>
        <end position="569"/>
    </location>
</feature>
<feature type="topological domain" description="Lumenal" evidence="2">
    <location>
        <begin position="570"/>
        <end position="581"/>
    </location>
</feature>
<feature type="short sequence motif" description="Prevents secretion from ER" evidence="2">
    <location>
        <begin position="577"/>
        <end position="581"/>
    </location>
</feature>
<keyword id="KW-0256">Endoplasmic reticulum</keyword>
<keyword id="KW-0337">GPI-anchor biosynthesis</keyword>
<keyword id="KW-0472">Membrane</keyword>
<keyword id="KW-1185">Reference proteome</keyword>
<keyword id="KW-0812">Transmembrane</keyword>
<keyword id="KW-1133">Transmembrane helix</keyword>
<reference key="1">
    <citation type="journal article" date="2002" name="Nature">
        <title>The genome sequence of Schizosaccharomyces pombe.</title>
        <authorList>
            <person name="Wood V."/>
            <person name="Gwilliam R."/>
            <person name="Rajandream M.A."/>
            <person name="Lyne M.H."/>
            <person name="Lyne R."/>
            <person name="Stewart A."/>
            <person name="Sgouros J.G."/>
            <person name="Peat N."/>
            <person name="Hayles J."/>
            <person name="Baker S.G."/>
            <person name="Basham D."/>
            <person name="Bowman S."/>
            <person name="Brooks K."/>
            <person name="Brown D."/>
            <person name="Brown S."/>
            <person name="Chillingworth T."/>
            <person name="Churcher C.M."/>
            <person name="Collins M."/>
            <person name="Connor R."/>
            <person name="Cronin A."/>
            <person name="Davis P."/>
            <person name="Feltwell T."/>
            <person name="Fraser A."/>
            <person name="Gentles S."/>
            <person name="Goble A."/>
            <person name="Hamlin N."/>
            <person name="Harris D.E."/>
            <person name="Hidalgo J."/>
            <person name="Hodgson G."/>
            <person name="Holroyd S."/>
            <person name="Hornsby T."/>
            <person name="Howarth S."/>
            <person name="Huckle E.J."/>
            <person name="Hunt S."/>
            <person name="Jagels K."/>
            <person name="James K.D."/>
            <person name="Jones L."/>
            <person name="Jones M."/>
            <person name="Leather S."/>
            <person name="McDonald S."/>
            <person name="McLean J."/>
            <person name="Mooney P."/>
            <person name="Moule S."/>
            <person name="Mungall K.L."/>
            <person name="Murphy L.D."/>
            <person name="Niblett D."/>
            <person name="Odell C."/>
            <person name="Oliver K."/>
            <person name="O'Neil S."/>
            <person name="Pearson D."/>
            <person name="Quail M.A."/>
            <person name="Rabbinowitsch E."/>
            <person name="Rutherford K.M."/>
            <person name="Rutter S."/>
            <person name="Saunders D."/>
            <person name="Seeger K."/>
            <person name="Sharp S."/>
            <person name="Skelton J."/>
            <person name="Simmonds M.N."/>
            <person name="Squares R."/>
            <person name="Squares S."/>
            <person name="Stevens K."/>
            <person name="Taylor K."/>
            <person name="Taylor R.G."/>
            <person name="Tivey A."/>
            <person name="Walsh S.V."/>
            <person name="Warren T."/>
            <person name="Whitehead S."/>
            <person name="Woodward J.R."/>
            <person name="Volckaert G."/>
            <person name="Aert R."/>
            <person name="Robben J."/>
            <person name="Grymonprez B."/>
            <person name="Weltjens I."/>
            <person name="Vanstreels E."/>
            <person name="Rieger M."/>
            <person name="Schaefer M."/>
            <person name="Mueller-Auer S."/>
            <person name="Gabel C."/>
            <person name="Fuchs M."/>
            <person name="Duesterhoeft A."/>
            <person name="Fritzc C."/>
            <person name="Holzer E."/>
            <person name="Moestl D."/>
            <person name="Hilbert H."/>
            <person name="Borzym K."/>
            <person name="Langer I."/>
            <person name="Beck A."/>
            <person name="Lehrach H."/>
            <person name="Reinhardt R."/>
            <person name="Pohl T.M."/>
            <person name="Eger P."/>
            <person name="Zimmermann W."/>
            <person name="Wedler H."/>
            <person name="Wambutt R."/>
            <person name="Purnelle B."/>
            <person name="Goffeau A."/>
            <person name="Cadieu E."/>
            <person name="Dreano S."/>
            <person name="Gloux S."/>
            <person name="Lelaure V."/>
            <person name="Mottier S."/>
            <person name="Galibert F."/>
            <person name="Aves S.J."/>
            <person name="Xiang Z."/>
            <person name="Hunt C."/>
            <person name="Moore K."/>
            <person name="Hurst S.M."/>
            <person name="Lucas M."/>
            <person name="Rochet M."/>
            <person name="Gaillardin C."/>
            <person name="Tallada V.A."/>
            <person name="Garzon A."/>
            <person name="Thode G."/>
            <person name="Daga R.R."/>
            <person name="Cruzado L."/>
            <person name="Jimenez J."/>
            <person name="Sanchez M."/>
            <person name="del Rey F."/>
            <person name="Benito J."/>
            <person name="Dominguez A."/>
            <person name="Revuelta J.L."/>
            <person name="Moreno S."/>
            <person name="Armstrong J."/>
            <person name="Forsburg S.L."/>
            <person name="Cerutti L."/>
            <person name="Lowe T."/>
            <person name="McCombie W.R."/>
            <person name="Paulsen I."/>
            <person name="Potashkin J."/>
            <person name="Shpakovski G.V."/>
            <person name="Ussery D."/>
            <person name="Barrell B.G."/>
            <person name="Nurse P."/>
        </authorList>
    </citation>
    <scope>NUCLEOTIDE SEQUENCE [LARGE SCALE GENOMIC DNA]</scope>
    <source>
        <strain>972 / ATCC 24843</strain>
    </source>
</reference>
<reference key="2">
    <citation type="journal article" date="2006" name="Nat. Biotechnol.">
        <title>ORFeome cloning and global analysis of protein localization in the fission yeast Schizosaccharomyces pombe.</title>
        <authorList>
            <person name="Matsuyama A."/>
            <person name="Arai R."/>
            <person name="Yashiroda Y."/>
            <person name="Shirai A."/>
            <person name="Kamata A."/>
            <person name="Sekido S."/>
            <person name="Kobayashi Y."/>
            <person name="Hashimoto A."/>
            <person name="Hamamoto M."/>
            <person name="Hiraoka Y."/>
            <person name="Horinouchi S."/>
            <person name="Yoshida M."/>
        </authorList>
    </citation>
    <scope>SUBCELLULAR LOCATION [LARGE SCALE ANALYSIS]</scope>
</reference>
<proteinExistence type="inferred from homology"/>
<dbReference type="EMBL" id="CU329670">
    <property type="protein sequence ID" value="CAB65611.1"/>
    <property type="molecule type" value="Genomic_DNA"/>
</dbReference>
<dbReference type="RefSeq" id="NP_593498.1">
    <property type="nucleotide sequence ID" value="NM_001018932.2"/>
</dbReference>
<dbReference type="SMR" id="Q9US48"/>
<dbReference type="ComplexPortal" id="CPX-10141">
    <property type="entry name" value="GPI-anchor transamidase complex"/>
</dbReference>
<dbReference type="FunCoup" id="Q9US48">
    <property type="interactions" value="279"/>
</dbReference>
<dbReference type="STRING" id="284812.Q9US48"/>
<dbReference type="PaxDb" id="4896-SPAC1002.11.1"/>
<dbReference type="EnsemblFungi" id="SPAC1002.11.1">
    <property type="protein sequence ID" value="SPAC1002.11.1:pep"/>
    <property type="gene ID" value="SPAC1002.11"/>
</dbReference>
<dbReference type="GeneID" id="2543268"/>
<dbReference type="KEGG" id="spo:2543268"/>
<dbReference type="PomBase" id="SPAC1002.11">
    <property type="gene designation" value="gaa1"/>
</dbReference>
<dbReference type="VEuPathDB" id="FungiDB:SPAC1002.11"/>
<dbReference type="eggNOG" id="KOG3566">
    <property type="taxonomic scope" value="Eukaryota"/>
</dbReference>
<dbReference type="HOGENOM" id="CLU_007442_3_1_1"/>
<dbReference type="InParanoid" id="Q9US48"/>
<dbReference type="OMA" id="RESEWNI"/>
<dbReference type="PhylomeDB" id="Q9US48"/>
<dbReference type="UniPathway" id="UPA00196"/>
<dbReference type="PRO" id="PR:Q9US48"/>
<dbReference type="Proteomes" id="UP000002485">
    <property type="component" value="Chromosome I"/>
</dbReference>
<dbReference type="GO" id="GO:0005783">
    <property type="term" value="C:endoplasmic reticulum"/>
    <property type="evidence" value="ECO:0007005"/>
    <property type="project" value="PomBase"/>
</dbReference>
<dbReference type="GO" id="GO:0042765">
    <property type="term" value="C:GPI-anchor transamidase complex"/>
    <property type="evidence" value="ECO:0000318"/>
    <property type="project" value="GO_Central"/>
</dbReference>
<dbReference type="GO" id="GO:0016255">
    <property type="term" value="P:attachment of GPI anchor to protein"/>
    <property type="evidence" value="ECO:0000318"/>
    <property type="project" value="GO_Central"/>
</dbReference>
<dbReference type="GO" id="GO:0006506">
    <property type="term" value="P:GPI anchor biosynthetic process"/>
    <property type="evidence" value="ECO:0007669"/>
    <property type="project" value="UniProtKB-UniPathway"/>
</dbReference>
<dbReference type="InterPro" id="IPR007246">
    <property type="entry name" value="Gaa1"/>
</dbReference>
<dbReference type="PANTHER" id="PTHR13304">
    <property type="entry name" value="GLYCOSYLPHOSPHATIDYLINOSITOL ANCHOR ATTACHMENT 1 PROTEIN"/>
    <property type="match status" value="1"/>
</dbReference>
<dbReference type="PANTHER" id="PTHR13304:SF0">
    <property type="entry name" value="GLYCOSYLPHOSPHATIDYLINOSITOL ANCHOR ATTACHMENT 1 PROTEIN"/>
    <property type="match status" value="1"/>
</dbReference>
<dbReference type="Pfam" id="PF04114">
    <property type="entry name" value="Gaa1"/>
    <property type="match status" value="1"/>
</dbReference>
<dbReference type="PIRSF" id="PIRSF036762">
    <property type="entry name" value="GAA1"/>
    <property type="match status" value="1"/>
</dbReference>
<sequence>MSLFTFVQIRVFPFLQRHLFFLQLSLTLIGLSWIFILPRNEIIDRLHVSESALLPGQVNTYFENRYSKTVSSSLTAANTWSHLDASVGTNTMYDDLEQIFTAMGLPTQKQNYSINIPGSEFNGSNFITTLRAPRGDATESLLLCVPWKDHIGQYNEAGVALAISLLKYFQGWSLWSKDIILVIFDDPVYGPSSFLTSYFDQTTPYISYTPLKIRSGSIQAGLSLELVTTENNSDVLEVLYQATNGQLPNLDLFNTISRIFMQHFNYPLRLQGYDFHANSGSSYTSRLKSLWMGMLTQAVSNVTSAHALFPQYRIDMLTLRMKVKDPFSFDMFRFGQAIESTFRSLNNLLEHLHQSFFFYFILDHLHFISIGNYMPSILILAASFMLGAYRHWINHEKKIDLWRPFSFWLFSIFCTIAAYYLVSSSTKITVFIFLYLMLTFIGIIFSTFMTSEDAELVLSYDLMSKSLFISVVSTLNFSLSFVVAILLVPLQFISFRFNRRLSLLFAVLTYFSTFIFLCSLSKILNGPLVPFWLWAKEYELFNSWLMPSVFMILVLPEIIFSVTSFFSLWNEPSVKTKTKTL</sequence>
<comment type="function">
    <text evidence="1">Component of the GPI transamidase complex. Required for a terminal step of GPI anchor attachment onto proteins (By similarity).</text>
</comment>
<comment type="pathway">
    <text>Glycolipid biosynthesis; glycosylphosphatidylinositol-anchor biosynthesis.</text>
</comment>
<comment type="subcellular location">
    <subcellularLocation>
        <location evidence="3">Endoplasmic reticulum membrane</location>
        <topology evidence="3">Multi-pass membrane protein</topology>
    </subcellularLocation>
</comment>
<accession>Q9US48</accession>